<evidence type="ECO:0000255" key="1">
    <source>
        <dbReference type="HAMAP-Rule" id="MF_00104"/>
    </source>
</evidence>
<evidence type="ECO:0000256" key="2">
    <source>
        <dbReference type="SAM" id="MobiDB-lite"/>
    </source>
</evidence>
<accession>Q6GHK2</accession>
<keyword id="KW-0963">Cytoplasm</keyword>
<keyword id="KW-0255">Endonuclease</keyword>
<keyword id="KW-0378">Hydrolase</keyword>
<keyword id="KW-0460">Magnesium</keyword>
<keyword id="KW-0479">Metal-binding</keyword>
<keyword id="KW-0507">mRNA processing</keyword>
<keyword id="KW-0540">Nuclease</keyword>
<keyword id="KW-0694">RNA-binding</keyword>
<keyword id="KW-0698">rRNA processing</keyword>
<keyword id="KW-0699">rRNA-binding</keyword>
<keyword id="KW-0819">tRNA processing</keyword>
<proteinExistence type="inferred from homology"/>
<sequence>MSKQKKSEIVNRFRKRFDTKMTELGFTYQNIDLYQQAFSHSSFINDFNMNRLDHNERLEFLGDAVLELTVSRYLFDKHPNLPEGNLTKMRATIVCEPSLVIFANKIGLNEMILLGKGEEKTGGRTRPSLISDAFEAFIGALYLDQGLDIVWKFAEKVIFPHVEQNELLGVVDFKTQFQEYVHQQNKGDVTYNLIKEEGPAHHRLFTSEVILQGEAIAEGKGKTKKESEQRAAESAYKQLKQIK</sequence>
<organism>
    <name type="scientific">Staphylococcus aureus (strain MRSA252)</name>
    <dbReference type="NCBI Taxonomy" id="282458"/>
    <lineage>
        <taxon>Bacteria</taxon>
        <taxon>Bacillati</taxon>
        <taxon>Bacillota</taxon>
        <taxon>Bacilli</taxon>
        <taxon>Bacillales</taxon>
        <taxon>Staphylococcaceae</taxon>
        <taxon>Staphylococcus</taxon>
    </lineage>
</organism>
<name>RNC_STAAR</name>
<reference key="1">
    <citation type="journal article" date="2004" name="Proc. Natl. Acad. Sci. U.S.A.">
        <title>Complete genomes of two clinical Staphylococcus aureus strains: evidence for the rapid evolution of virulence and drug resistance.</title>
        <authorList>
            <person name="Holden M.T.G."/>
            <person name="Feil E.J."/>
            <person name="Lindsay J.A."/>
            <person name="Peacock S.J."/>
            <person name="Day N.P.J."/>
            <person name="Enright M.C."/>
            <person name="Foster T.J."/>
            <person name="Moore C.E."/>
            <person name="Hurst L."/>
            <person name="Atkin R."/>
            <person name="Barron A."/>
            <person name="Bason N."/>
            <person name="Bentley S.D."/>
            <person name="Chillingworth C."/>
            <person name="Chillingworth T."/>
            <person name="Churcher C."/>
            <person name="Clark L."/>
            <person name="Corton C."/>
            <person name="Cronin A."/>
            <person name="Doggett J."/>
            <person name="Dowd L."/>
            <person name="Feltwell T."/>
            <person name="Hance Z."/>
            <person name="Harris B."/>
            <person name="Hauser H."/>
            <person name="Holroyd S."/>
            <person name="Jagels K."/>
            <person name="James K.D."/>
            <person name="Lennard N."/>
            <person name="Line A."/>
            <person name="Mayes R."/>
            <person name="Moule S."/>
            <person name="Mungall K."/>
            <person name="Ormond D."/>
            <person name="Quail M.A."/>
            <person name="Rabbinowitsch E."/>
            <person name="Rutherford K.M."/>
            <person name="Sanders M."/>
            <person name="Sharp S."/>
            <person name="Simmonds M."/>
            <person name="Stevens K."/>
            <person name="Whitehead S."/>
            <person name="Barrell B.G."/>
            <person name="Spratt B.G."/>
            <person name="Parkhill J."/>
        </authorList>
    </citation>
    <scope>NUCLEOTIDE SEQUENCE [LARGE SCALE GENOMIC DNA]</scope>
    <source>
        <strain>MRSA252</strain>
    </source>
</reference>
<protein>
    <recommendedName>
        <fullName evidence="1">Ribonuclease 3</fullName>
        <ecNumber evidence="1">3.1.26.3</ecNumber>
    </recommendedName>
    <alternativeName>
        <fullName evidence="1">Ribonuclease III</fullName>
        <shortName evidence="1">RNase III</shortName>
    </alternativeName>
</protein>
<dbReference type="EC" id="3.1.26.3" evidence="1"/>
<dbReference type="EMBL" id="BX571856">
    <property type="protein sequence ID" value="CAG40211.1"/>
    <property type="molecule type" value="Genomic_DNA"/>
</dbReference>
<dbReference type="RefSeq" id="WP_000043237.1">
    <property type="nucleotide sequence ID" value="NC_002952.2"/>
</dbReference>
<dbReference type="SMR" id="Q6GHK2"/>
<dbReference type="KEGG" id="sar:SAR1209"/>
<dbReference type="HOGENOM" id="CLU_000907_1_3_9"/>
<dbReference type="Proteomes" id="UP000000596">
    <property type="component" value="Chromosome"/>
</dbReference>
<dbReference type="GO" id="GO:0005737">
    <property type="term" value="C:cytoplasm"/>
    <property type="evidence" value="ECO:0007669"/>
    <property type="project" value="UniProtKB-SubCell"/>
</dbReference>
<dbReference type="GO" id="GO:0003725">
    <property type="term" value="F:double-stranded RNA binding"/>
    <property type="evidence" value="ECO:0007669"/>
    <property type="project" value="TreeGrafter"/>
</dbReference>
<dbReference type="GO" id="GO:0046872">
    <property type="term" value="F:metal ion binding"/>
    <property type="evidence" value="ECO:0007669"/>
    <property type="project" value="UniProtKB-KW"/>
</dbReference>
<dbReference type="GO" id="GO:0004525">
    <property type="term" value="F:ribonuclease III activity"/>
    <property type="evidence" value="ECO:0007669"/>
    <property type="project" value="UniProtKB-UniRule"/>
</dbReference>
<dbReference type="GO" id="GO:0019843">
    <property type="term" value="F:rRNA binding"/>
    <property type="evidence" value="ECO:0007669"/>
    <property type="project" value="UniProtKB-KW"/>
</dbReference>
<dbReference type="GO" id="GO:0006397">
    <property type="term" value="P:mRNA processing"/>
    <property type="evidence" value="ECO:0007669"/>
    <property type="project" value="UniProtKB-UniRule"/>
</dbReference>
<dbReference type="GO" id="GO:0010468">
    <property type="term" value="P:regulation of gene expression"/>
    <property type="evidence" value="ECO:0007669"/>
    <property type="project" value="TreeGrafter"/>
</dbReference>
<dbReference type="GO" id="GO:0006364">
    <property type="term" value="P:rRNA processing"/>
    <property type="evidence" value="ECO:0007669"/>
    <property type="project" value="UniProtKB-UniRule"/>
</dbReference>
<dbReference type="GO" id="GO:0008033">
    <property type="term" value="P:tRNA processing"/>
    <property type="evidence" value="ECO:0007669"/>
    <property type="project" value="UniProtKB-KW"/>
</dbReference>
<dbReference type="CDD" id="cd10845">
    <property type="entry name" value="DSRM_RNAse_III_family"/>
    <property type="match status" value="1"/>
</dbReference>
<dbReference type="CDD" id="cd00593">
    <property type="entry name" value="RIBOc"/>
    <property type="match status" value="1"/>
</dbReference>
<dbReference type="FunFam" id="1.10.1520.10:FF:000001">
    <property type="entry name" value="Ribonuclease 3"/>
    <property type="match status" value="1"/>
</dbReference>
<dbReference type="FunFam" id="3.30.160.20:FF:000003">
    <property type="entry name" value="Ribonuclease 3"/>
    <property type="match status" value="1"/>
</dbReference>
<dbReference type="Gene3D" id="3.30.160.20">
    <property type="match status" value="1"/>
</dbReference>
<dbReference type="Gene3D" id="1.10.1520.10">
    <property type="entry name" value="Ribonuclease III domain"/>
    <property type="match status" value="1"/>
</dbReference>
<dbReference type="HAMAP" id="MF_00104">
    <property type="entry name" value="RNase_III"/>
    <property type="match status" value="1"/>
</dbReference>
<dbReference type="InterPro" id="IPR014720">
    <property type="entry name" value="dsRBD_dom"/>
</dbReference>
<dbReference type="InterPro" id="IPR011907">
    <property type="entry name" value="RNase_III"/>
</dbReference>
<dbReference type="InterPro" id="IPR000999">
    <property type="entry name" value="RNase_III_dom"/>
</dbReference>
<dbReference type="InterPro" id="IPR036389">
    <property type="entry name" value="RNase_III_sf"/>
</dbReference>
<dbReference type="NCBIfam" id="TIGR02191">
    <property type="entry name" value="RNaseIII"/>
    <property type="match status" value="1"/>
</dbReference>
<dbReference type="PANTHER" id="PTHR11207:SF0">
    <property type="entry name" value="RIBONUCLEASE 3"/>
    <property type="match status" value="1"/>
</dbReference>
<dbReference type="PANTHER" id="PTHR11207">
    <property type="entry name" value="RIBONUCLEASE III"/>
    <property type="match status" value="1"/>
</dbReference>
<dbReference type="Pfam" id="PF00035">
    <property type="entry name" value="dsrm"/>
    <property type="match status" value="1"/>
</dbReference>
<dbReference type="Pfam" id="PF14622">
    <property type="entry name" value="Ribonucleas_3_3"/>
    <property type="match status" value="1"/>
</dbReference>
<dbReference type="SMART" id="SM00358">
    <property type="entry name" value="DSRM"/>
    <property type="match status" value="1"/>
</dbReference>
<dbReference type="SMART" id="SM00535">
    <property type="entry name" value="RIBOc"/>
    <property type="match status" value="1"/>
</dbReference>
<dbReference type="SUPFAM" id="SSF54768">
    <property type="entry name" value="dsRNA-binding domain-like"/>
    <property type="match status" value="1"/>
</dbReference>
<dbReference type="SUPFAM" id="SSF69065">
    <property type="entry name" value="RNase III domain-like"/>
    <property type="match status" value="1"/>
</dbReference>
<dbReference type="PROSITE" id="PS50137">
    <property type="entry name" value="DS_RBD"/>
    <property type="match status" value="1"/>
</dbReference>
<dbReference type="PROSITE" id="PS00517">
    <property type="entry name" value="RNASE_3_1"/>
    <property type="match status" value="1"/>
</dbReference>
<dbReference type="PROSITE" id="PS50142">
    <property type="entry name" value="RNASE_3_2"/>
    <property type="match status" value="1"/>
</dbReference>
<feature type="chain" id="PRO_0000180435" description="Ribonuclease 3">
    <location>
        <begin position="1"/>
        <end position="243"/>
    </location>
</feature>
<feature type="domain" description="RNase III" evidence="1">
    <location>
        <begin position="10"/>
        <end position="146"/>
    </location>
</feature>
<feature type="domain" description="DRBM" evidence="1">
    <location>
        <begin position="172"/>
        <end position="241"/>
    </location>
</feature>
<feature type="region of interest" description="Disordered" evidence="2">
    <location>
        <begin position="219"/>
        <end position="243"/>
    </location>
</feature>
<feature type="compositionally biased region" description="Basic and acidic residues" evidence="2">
    <location>
        <begin position="219"/>
        <end position="231"/>
    </location>
</feature>
<feature type="active site" evidence="1">
    <location>
        <position position="63"/>
    </location>
</feature>
<feature type="active site" evidence="1">
    <location>
        <position position="135"/>
    </location>
</feature>
<feature type="binding site" evidence="1">
    <location>
        <position position="59"/>
    </location>
    <ligand>
        <name>Mg(2+)</name>
        <dbReference type="ChEBI" id="CHEBI:18420"/>
    </ligand>
</feature>
<feature type="binding site" evidence="1">
    <location>
        <position position="132"/>
    </location>
    <ligand>
        <name>Mg(2+)</name>
        <dbReference type="ChEBI" id="CHEBI:18420"/>
    </ligand>
</feature>
<feature type="binding site" evidence="1">
    <location>
        <position position="135"/>
    </location>
    <ligand>
        <name>Mg(2+)</name>
        <dbReference type="ChEBI" id="CHEBI:18420"/>
    </ligand>
</feature>
<comment type="function">
    <text evidence="1">Digests double-stranded RNA. Involved in the processing of primary rRNA transcript to yield the immediate precursors to the large and small rRNAs (23S and 16S). Processes some mRNAs, and tRNAs when they are encoded in the rRNA operon. Processes pre-crRNA and tracrRNA of type II CRISPR loci if present in the organism.</text>
</comment>
<comment type="catalytic activity">
    <reaction evidence="1">
        <text>Endonucleolytic cleavage to 5'-phosphomonoester.</text>
        <dbReference type="EC" id="3.1.26.3"/>
    </reaction>
</comment>
<comment type="cofactor">
    <cofactor evidence="1">
        <name>Mg(2+)</name>
        <dbReference type="ChEBI" id="CHEBI:18420"/>
    </cofactor>
</comment>
<comment type="subunit">
    <text evidence="1">Homodimer.</text>
</comment>
<comment type="subcellular location">
    <subcellularLocation>
        <location evidence="1">Cytoplasm</location>
    </subcellularLocation>
</comment>
<comment type="similarity">
    <text evidence="1">Belongs to the ribonuclease III family.</text>
</comment>
<gene>
    <name evidence="1" type="primary">rnc</name>
    <name type="ordered locus">SAR1209</name>
</gene>